<organism>
    <name type="scientific">Pyrobaculum aerophilum (strain ATCC 51768 / DSM 7523 / JCM 9630 / CIP 104966 / NBRC 100827 / IM2)</name>
    <dbReference type="NCBI Taxonomy" id="178306"/>
    <lineage>
        <taxon>Archaea</taxon>
        <taxon>Thermoproteota</taxon>
        <taxon>Thermoprotei</taxon>
        <taxon>Thermoproteales</taxon>
        <taxon>Thermoproteaceae</taxon>
        <taxon>Pyrobaculum</taxon>
    </lineage>
</organism>
<name>RL32_PYRAE</name>
<proteinExistence type="inferred from homology"/>
<dbReference type="EMBL" id="AE009441">
    <property type="protein sequence ID" value="AAL63945.1"/>
    <property type="molecule type" value="Genomic_DNA"/>
</dbReference>
<dbReference type="RefSeq" id="WP_011008415.1">
    <property type="nucleotide sequence ID" value="NC_003364.1"/>
</dbReference>
<dbReference type="SMR" id="Q8ZVV9"/>
<dbReference type="FunCoup" id="Q8ZVV9">
    <property type="interactions" value="202"/>
</dbReference>
<dbReference type="STRING" id="178306.PAE2099"/>
<dbReference type="EnsemblBacteria" id="AAL63945">
    <property type="protein sequence ID" value="AAL63945"/>
    <property type="gene ID" value="PAE2099"/>
</dbReference>
<dbReference type="GeneID" id="1464277"/>
<dbReference type="KEGG" id="pai:PAE2099"/>
<dbReference type="PATRIC" id="fig|178306.9.peg.1550"/>
<dbReference type="eggNOG" id="arCOG00781">
    <property type="taxonomic scope" value="Archaea"/>
</dbReference>
<dbReference type="HOGENOM" id="CLU_071479_3_0_2"/>
<dbReference type="InParanoid" id="Q8ZVV9"/>
<dbReference type="Proteomes" id="UP000002439">
    <property type="component" value="Chromosome"/>
</dbReference>
<dbReference type="GO" id="GO:0022625">
    <property type="term" value="C:cytosolic large ribosomal subunit"/>
    <property type="evidence" value="ECO:0000318"/>
    <property type="project" value="GO_Central"/>
</dbReference>
<dbReference type="GO" id="GO:0003735">
    <property type="term" value="F:structural constituent of ribosome"/>
    <property type="evidence" value="ECO:0007669"/>
    <property type="project" value="InterPro"/>
</dbReference>
<dbReference type="GO" id="GO:0006412">
    <property type="term" value="P:translation"/>
    <property type="evidence" value="ECO:0007669"/>
    <property type="project" value="UniProtKB-UniRule"/>
</dbReference>
<dbReference type="CDD" id="cd00513">
    <property type="entry name" value="Ribosomal_L32_L32e"/>
    <property type="match status" value="1"/>
</dbReference>
<dbReference type="HAMAP" id="MF_00810">
    <property type="entry name" value="Ribosomal_eL32"/>
    <property type="match status" value="1"/>
</dbReference>
<dbReference type="InterPro" id="IPR001515">
    <property type="entry name" value="Ribosomal_eL32"/>
</dbReference>
<dbReference type="InterPro" id="IPR023654">
    <property type="entry name" value="Ribosomal_eL32_arc"/>
</dbReference>
<dbReference type="InterPro" id="IPR036351">
    <property type="entry name" value="Ribosomal_eL32_sf"/>
</dbReference>
<dbReference type="NCBIfam" id="NF006332">
    <property type="entry name" value="PRK08562.1"/>
    <property type="match status" value="1"/>
</dbReference>
<dbReference type="PANTHER" id="PTHR23413">
    <property type="entry name" value="60S RIBOSOMAL PROTEIN L32 AND DNA-DIRECTED RNA POLYMERASE II, SUBUNIT N"/>
    <property type="match status" value="1"/>
</dbReference>
<dbReference type="PANTHER" id="PTHR23413:SF1">
    <property type="entry name" value="RIBOSOMAL PROTEIN L32"/>
    <property type="match status" value="1"/>
</dbReference>
<dbReference type="Pfam" id="PF01655">
    <property type="entry name" value="Ribosomal_L32e"/>
    <property type="match status" value="1"/>
</dbReference>
<dbReference type="SMART" id="SM01393">
    <property type="entry name" value="Ribosomal_L32e"/>
    <property type="match status" value="1"/>
</dbReference>
<dbReference type="SUPFAM" id="SSF52042">
    <property type="entry name" value="Ribosomal protein L32e"/>
    <property type="match status" value="1"/>
</dbReference>
<keyword id="KW-1185">Reference proteome</keyword>
<keyword id="KW-0687">Ribonucleoprotein</keyword>
<keyword id="KW-0689">Ribosomal protein</keyword>
<protein>
    <recommendedName>
        <fullName evidence="1">Large ribosomal subunit protein eL32</fullName>
    </recommendedName>
    <alternativeName>
        <fullName>50S ribosomal protein L32e</fullName>
    </alternativeName>
</protein>
<accession>Q8ZVV9</accession>
<reference key="1">
    <citation type="journal article" date="2002" name="Proc. Natl. Acad. Sci. U.S.A.">
        <title>Genome sequence of the hyperthermophilic crenarchaeon Pyrobaculum aerophilum.</title>
        <authorList>
            <person name="Fitz-Gibbon S.T."/>
            <person name="Ladner H."/>
            <person name="Kim U.-J."/>
            <person name="Stetter K.O."/>
            <person name="Simon M.I."/>
            <person name="Miller J.H."/>
        </authorList>
    </citation>
    <scope>NUCLEOTIDE SEQUENCE [LARGE SCALE GENOMIC DNA]</scope>
    <source>
        <strain>ATCC 51768 / DSM 7523 / JCM 9630 / CIP 104966 / NBRC 100827 / IM2</strain>
    </source>
</reference>
<feature type="chain" id="PRO_0000131160" description="Large ribosomal subunit protein eL32">
    <location>
        <begin position="1"/>
        <end position="152"/>
    </location>
</feature>
<gene>
    <name type="primary">rpl32e</name>
    <name type="ordered locus">PAE2099</name>
</gene>
<sequence length="152" mass="18002">MSRPRRELPQPLKRLLKLRLLLKRKKPEFVRIDQWRYKRIEDSGWRNTRSIDNKIRRKWKGWPKPVEVGYRKPAAVRGLHPSGFVEVLVHNVEELAKLDPKTHAIRIGRTVGLRKRIEIVKRAREMGFYVLNPGKRVEEALKKELNTAQTGQ</sequence>
<comment type="similarity">
    <text evidence="1">Belongs to the eukaryotic ribosomal protein eL32 family.</text>
</comment>
<evidence type="ECO:0000305" key="1"/>